<keyword id="KW-0328">Glycosyltransferase</keyword>
<keyword id="KW-1185">Reference proteome</keyword>
<keyword id="KW-0808">Transferase</keyword>
<comment type="function">
    <text evidence="1">Catalyzes the conversion of AMP and phosphate to adenine and ribose 1,5-bisphosphate (R15P). Exhibits phosphorylase activity toward CMP and UMP in addition to AMP. Functions in an archaeal AMP degradation pathway, together with R15P isomerase and RubisCO.</text>
</comment>
<comment type="catalytic activity">
    <reaction evidence="1">
        <text>AMP + phosphate = alpha-D-ribose 1,5-bisphosphate + adenine</text>
        <dbReference type="Rhea" id="RHEA:36975"/>
        <dbReference type="ChEBI" id="CHEBI:16708"/>
        <dbReference type="ChEBI" id="CHEBI:43474"/>
        <dbReference type="ChEBI" id="CHEBI:68688"/>
        <dbReference type="ChEBI" id="CHEBI:456215"/>
        <dbReference type="EC" id="2.4.2.57"/>
    </reaction>
</comment>
<comment type="catalytic activity">
    <reaction evidence="1">
        <text>CMP + phosphate = cytosine + alpha-D-ribose 1,5-bisphosphate</text>
        <dbReference type="Rhea" id="RHEA:36987"/>
        <dbReference type="ChEBI" id="CHEBI:16040"/>
        <dbReference type="ChEBI" id="CHEBI:43474"/>
        <dbReference type="ChEBI" id="CHEBI:60377"/>
        <dbReference type="ChEBI" id="CHEBI:68688"/>
        <dbReference type="EC" id="2.4.2.57"/>
    </reaction>
</comment>
<comment type="catalytic activity">
    <reaction evidence="1">
        <text>UMP + phosphate = alpha-D-ribose 1,5-bisphosphate + uracil</text>
        <dbReference type="Rhea" id="RHEA:36991"/>
        <dbReference type="ChEBI" id="CHEBI:17568"/>
        <dbReference type="ChEBI" id="CHEBI:43474"/>
        <dbReference type="ChEBI" id="CHEBI:57865"/>
        <dbReference type="ChEBI" id="CHEBI:68688"/>
        <dbReference type="EC" id="2.4.2.57"/>
    </reaction>
</comment>
<comment type="similarity">
    <text evidence="1">Belongs to the thymidine/pyrimidine-nucleoside phosphorylase family. Type 2 subfamily.</text>
</comment>
<evidence type="ECO:0000255" key="1">
    <source>
        <dbReference type="HAMAP-Rule" id="MF_02132"/>
    </source>
</evidence>
<proteinExistence type="inferred from homology"/>
<accession>C6A2A0</accession>
<sequence length="503" mass="54203">MKAKVRILDIETGRFLAFISEEDAKNAKLHPGDLVKIETAKRTIYGDVVISKTINPGEIGVTKDILRSYTFSEGEVVNLVPSETPESVRYIRRKMNGQKLKKVEIEAIVKDIVNRKLRDIEISSFVTSLEINGLDMDEIAWLTTAMAETGDMLDIDRKPIMDVHSIGGVPGNKTNILVVPIVAAAGLTIPKTSSRAITSAAGTADVVEVLAPVTHSLDEIKRIVEKIGACLVWGGALNLAPADDLTIKAERALSIDPRGLMLASIMSKKYAMGSQYVLIDIPTGEGVKVEKVEDARSLAKDFIELGKRLGQYVETAITYGGQPIGHTVGPALEAKEALETIIEGKGPGSLVEKATGLAGILLEMGGVAPAGMGKKMAKEILESGKAYEKLKEIIEEQGGDPNIKPEDIPIGDKTYTFVAQTSGYITRIDNKAITAIARAAGAPEDKGAGIMLHVKVGEKVKERDPLFTVHAESGTRLDQAIIQARRMEPIRIEGMVLQRIGNI</sequence>
<reference key="1">
    <citation type="journal article" date="2009" name="Appl. Environ. Microbiol.">
        <title>Metabolic versatility and indigenous origin of the archaeon Thermococcus sibiricus, isolated from a siberian oil reservoir, as revealed by genome analysis.</title>
        <authorList>
            <person name="Mardanov A.V."/>
            <person name="Ravin N.V."/>
            <person name="Svetlitchnyi V.A."/>
            <person name="Beletsky A.V."/>
            <person name="Miroshnichenko M.L."/>
            <person name="Bonch-Osmolovskaya E.A."/>
            <person name="Skryabin K.G."/>
        </authorList>
    </citation>
    <scope>NUCLEOTIDE SEQUENCE [LARGE SCALE GENOMIC DNA]</scope>
    <source>
        <strain>DSM 12597 / MM 739</strain>
    </source>
</reference>
<dbReference type="EC" id="2.4.2.57" evidence="1"/>
<dbReference type="EMBL" id="CP001463">
    <property type="protein sequence ID" value="ACS89745.1"/>
    <property type="molecule type" value="Genomic_DNA"/>
</dbReference>
<dbReference type="RefSeq" id="WP_015848965.1">
    <property type="nucleotide sequence ID" value="NC_012883.1"/>
</dbReference>
<dbReference type="SMR" id="C6A2A0"/>
<dbReference type="STRING" id="604354.TSIB_0680"/>
<dbReference type="GeneID" id="8095668"/>
<dbReference type="KEGG" id="tsi:TSIB_0680"/>
<dbReference type="eggNOG" id="arCOG02013">
    <property type="taxonomic scope" value="Archaea"/>
</dbReference>
<dbReference type="HOGENOM" id="CLU_025040_6_0_2"/>
<dbReference type="OrthoDB" id="9827at2157"/>
<dbReference type="Proteomes" id="UP000009079">
    <property type="component" value="Chromosome"/>
</dbReference>
<dbReference type="GO" id="GO:0005829">
    <property type="term" value="C:cytosol"/>
    <property type="evidence" value="ECO:0007669"/>
    <property type="project" value="TreeGrafter"/>
</dbReference>
<dbReference type="GO" id="GO:0004645">
    <property type="term" value="F:1,4-alpha-oligoglucan phosphorylase activity"/>
    <property type="evidence" value="ECO:0007669"/>
    <property type="project" value="InterPro"/>
</dbReference>
<dbReference type="GO" id="GO:0016208">
    <property type="term" value="F:AMP binding"/>
    <property type="evidence" value="ECO:0007669"/>
    <property type="project" value="UniProtKB-UniRule"/>
</dbReference>
<dbReference type="GO" id="GO:0016763">
    <property type="term" value="F:pentosyltransferase activity"/>
    <property type="evidence" value="ECO:0007669"/>
    <property type="project" value="UniProtKB-UniRule"/>
</dbReference>
<dbReference type="GO" id="GO:0006196">
    <property type="term" value="P:AMP catabolic process"/>
    <property type="evidence" value="ECO:0007669"/>
    <property type="project" value="UniProtKB-UniRule"/>
</dbReference>
<dbReference type="GO" id="GO:0046125">
    <property type="term" value="P:pyrimidine deoxyribonucleoside metabolic process"/>
    <property type="evidence" value="ECO:0007669"/>
    <property type="project" value="InterPro"/>
</dbReference>
<dbReference type="GO" id="GO:0006206">
    <property type="term" value="P:pyrimidine nucleobase metabolic process"/>
    <property type="evidence" value="ECO:0007669"/>
    <property type="project" value="InterPro"/>
</dbReference>
<dbReference type="FunFam" id="3.90.1170.30:FF:000004">
    <property type="entry name" value="AMP phosphorylase"/>
    <property type="match status" value="1"/>
</dbReference>
<dbReference type="Gene3D" id="1.20.970.50">
    <property type="match status" value="1"/>
</dbReference>
<dbReference type="Gene3D" id="2.40.40.20">
    <property type="match status" value="1"/>
</dbReference>
<dbReference type="Gene3D" id="3.40.1030.10">
    <property type="entry name" value="Nucleoside phosphorylase/phosphoribosyltransferase catalytic domain"/>
    <property type="match status" value="1"/>
</dbReference>
<dbReference type="Gene3D" id="3.90.1170.30">
    <property type="entry name" value="Pyrimidine nucleoside phosphorylase-like, C-terminal domain"/>
    <property type="match status" value="1"/>
</dbReference>
<dbReference type="HAMAP" id="MF_02132">
    <property type="entry name" value="AMP_phosphorylase"/>
    <property type="match status" value="1"/>
</dbReference>
<dbReference type="InterPro" id="IPR017713">
    <property type="entry name" value="AMP_phosphorylase"/>
</dbReference>
<dbReference type="InterPro" id="IPR009010">
    <property type="entry name" value="Asp_de-COase-like_dom_sf"/>
</dbReference>
<dbReference type="InterPro" id="IPR000312">
    <property type="entry name" value="Glycosyl_Trfase_fam3"/>
</dbReference>
<dbReference type="InterPro" id="IPR017459">
    <property type="entry name" value="Glycosyl_Trfase_fam3_N_dom"/>
</dbReference>
<dbReference type="InterPro" id="IPR036320">
    <property type="entry name" value="Glycosyl_Trfase_fam3_N_dom_sf"/>
</dbReference>
<dbReference type="InterPro" id="IPR035902">
    <property type="entry name" value="Nuc_phospho_transferase"/>
</dbReference>
<dbReference type="InterPro" id="IPR036566">
    <property type="entry name" value="PYNP-like_C_sf"/>
</dbReference>
<dbReference type="InterPro" id="IPR013102">
    <property type="entry name" value="PYNP_C"/>
</dbReference>
<dbReference type="InterPro" id="IPR017872">
    <property type="entry name" value="Pyrmidine_PPase_CS"/>
</dbReference>
<dbReference type="InterPro" id="IPR013466">
    <property type="entry name" value="Thymidine/AMP_Pase"/>
</dbReference>
<dbReference type="InterPro" id="IPR000053">
    <property type="entry name" value="Thymidine/pyrmidine_PPase"/>
</dbReference>
<dbReference type="NCBIfam" id="TIGR03327">
    <property type="entry name" value="AMP_phos"/>
    <property type="match status" value="1"/>
</dbReference>
<dbReference type="NCBIfam" id="TIGR02645">
    <property type="entry name" value="ARCH_P_rylase"/>
    <property type="match status" value="1"/>
</dbReference>
<dbReference type="NCBIfam" id="NF003338">
    <property type="entry name" value="PRK04350.1"/>
    <property type="match status" value="1"/>
</dbReference>
<dbReference type="PANTHER" id="PTHR10515">
    <property type="entry name" value="THYMIDINE PHOSPHORYLASE"/>
    <property type="match status" value="1"/>
</dbReference>
<dbReference type="PANTHER" id="PTHR10515:SF0">
    <property type="entry name" value="THYMIDINE PHOSPHORYLASE"/>
    <property type="match status" value="1"/>
</dbReference>
<dbReference type="Pfam" id="PF02885">
    <property type="entry name" value="Glycos_trans_3N"/>
    <property type="match status" value="1"/>
</dbReference>
<dbReference type="Pfam" id="PF00591">
    <property type="entry name" value="Glycos_transf_3"/>
    <property type="match status" value="1"/>
</dbReference>
<dbReference type="Pfam" id="PF07831">
    <property type="entry name" value="PYNP_C"/>
    <property type="match status" value="1"/>
</dbReference>
<dbReference type="PIRSF" id="PIRSF000478">
    <property type="entry name" value="TP_PyNP"/>
    <property type="match status" value="1"/>
</dbReference>
<dbReference type="SMART" id="SM00941">
    <property type="entry name" value="PYNP_C"/>
    <property type="match status" value="1"/>
</dbReference>
<dbReference type="SUPFAM" id="SSF50692">
    <property type="entry name" value="ADC-like"/>
    <property type="match status" value="1"/>
</dbReference>
<dbReference type="SUPFAM" id="SSF52418">
    <property type="entry name" value="Nucleoside phosphorylase/phosphoribosyltransferase catalytic domain"/>
    <property type="match status" value="1"/>
</dbReference>
<dbReference type="SUPFAM" id="SSF47648">
    <property type="entry name" value="Nucleoside phosphorylase/phosphoribosyltransferase N-terminal domain"/>
    <property type="match status" value="1"/>
</dbReference>
<dbReference type="SUPFAM" id="SSF54680">
    <property type="entry name" value="Pyrimidine nucleoside phosphorylase C-terminal domain"/>
    <property type="match status" value="1"/>
</dbReference>
<dbReference type="PROSITE" id="PS00647">
    <property type="entry name" value="THYMID_PHOSPHORYLASE"/>
    <property type="match status" value="1"/>
</dbReference>
<name>AMPPA_THESM</name>
<organism>
    <name type="scientific">Thermococcus sibiricus (strain DSM 12597 / MM 739)</name>
    <dbReference type="NCBI Taxonomy" id="604354"/>
    <lineage>
        <taxon>Archaea</taxon>
        <taxon>Methanobacteriati</taxon>
        <taxon>Methanobacteriota</taxon>
        <taxon>Thermococci</taxon>
        <taxon>Thermococcales</taxon>
        <taxon>Thermococcaceae</taxon>
        <taxon>Thermococcus</taxon>
    </lineage>
</organism>
<feature type="chain" id="PRO_1000212644" description="AMP phosphorylase">
    <location>
        <begin position="1"/>
        <end position="503"/>
    </location>
</feature>
<feature type="active site" description="Proton donor" evidence="1">
    <location>
        <position position="256"/>
    </location>
</feature>
<feature type="binding site" evidence="1">
    <location>
        <position position="168"/>
    </location>
    <ligand>
        <name>AMP</name>
        <dbReference type="ChEBI" id="CHEBI:456215"/>
    </ligand>
</feature>
<feature type="binding site" evidence="1">
    <location>
        <begin position="194"/>
        <end position="199"/>
    </location>
    <ligand>
        <name>AMP</name>
        <dbReference type="ChEBI" id="CHEBI:456215"/>
    </ligand>
</feature>
<feature type="binding site" evidence="1">
    <location>
        <position position="203"/>
    </location>
    <ligand>
        <name>AMP</name>
        <dbReference type="ChEBI" id="CHEBI:456215"/>
    </ligand>
</feature>
<feature type="binding site" evidence="1">
    <location>
        <position position="264"/>
    </location>
    <ligand>
        <name>AMP</name>
        <dbReference type="ChEBI" id="CHEBI:456215"/>
    </ligand>
</feature>
<feature type="binding site" evidence="1">
    <location>
        <position position="288"/>
    </location>
    <ligand>
        <name>AMP</name>
        <dbReference type="ChEBI" id="CHEBI:456215"/>
    </ligand>
</feature>
<protein>
    <recommendedName>
        <fullName evidence="1">AMP phosphorylase</fullName>
        <shortName evidence="1">AMPpase</shortName>
        <ecNumber evidence="1">2.4.2.57</ecNumber>
    </recommendedName>
    <alternativeName>
        <fullName evidence="1">Nucleoside monophosphate phosphorylase</fullName>
        <shortName evidence="1">NMP phosphorylase</shortName>
    </alternativeName>
</protein>
<gene>
    <name type="ordered locus">TSIB_0680</name>
</gene>